<evidence type="ECO:0000255" key="1">
    <source>
        <dbReference type="HAMAP-Rule" id="MF_01620"/>
    </source>
</evidence>
<reference key="1">
    <citation type="journal article" date="2007" name="J. Bacteriol.">
        <title>The genome sequence of avian pathogenic Escherichia coli strain O1:K1:H7 shares strong similarities with human extraintestinal pathogenic E. coli genomes.</title>
        <authorList>
            <person name="Johnson T.J."/>
            <person name="Kariyawasam S."/>
            <person name="Wannemuehler Y."/>
            <person name="Mangiamele P."/>
            <person name="Johnson S.J."/>
            <person name="Doetkott C."/>
            <person name="Skyberg J.A."/>
            <person name="Lynne A.M."/>
            <person name="Johnson J.R."/>
            <person name="Nolan L.K."/>
        </authorList>
    </citation>
    <scope>NUCLEOTIDE SEQUENCE [LARGE SCALE GENOMIC DNA]</scope>
</reference>
<name>FADA_ECOK1</name>
<proteinExistence type="inferred from homology"/>
<gene>
    <name evidence="1" type="primary">fadA</name>
    <name type="ordered locus">Ecok1_38280</name>
    <name type="ORF">APECO1_2612</name>
</gene>
<feature type="chain" id="PRO_0000292889" description="3-ketoacyl-CoA thiolase">
    <location>
        <begin position="1"/>
        <end position="387"/>
    </location>
</feature>
<feature type="active site" description="Acyl-thioester intermediate" evidence="1">
    <location>
        <position position="91"/>
    </location>
</feature>
<feature type="active site" description="Proton acceptor" evidence="1">
    <location>
        <position position="343"/>
    </location>
</feature>
<feature type="active site" description="Proton acceptor" evidence="1">
    <location>
        <position position="373"/>
    </location>
</feature>
<keyword id="KW-0012">Acyltransferase</keyword>
<keyword id="KW-0963">Cytoplasm</keyword>
<keyword id="KW-0276">Fatty acid metabolism</keyword>
<keyword id="KW-0442">Lipid degradation</keyword>
<keyword id="KW-0443">Lipid metabolism</keyword>
<keyword id="KW-1185">Reference proteome</keyword>
<keyword id="KW-0808">Transferase</keyword>
<accession>A1AI32</accession>
<protein>
    <recommendedName>
        <fullName evidence="1">3-ketoacyl-CoA thiolase</fullName>
        <ecNumber evidence="1">2.3.1.16</ecNumber>
    </recommendedName>
    <alternativeName>
        <fullName evidence="1">Acetyl-CoA acyltransferase</fullName>
    </alternativeName>
    <alternativeName>
        <fullName evidence="1">Beta-ketothiolase</fullName>
    </alternativeName>
    <alternativeName>
        <fullName evidence="1">Fatty acid oxidation complex subunit beta</fullName>
    </alternativeName>
</protein>
<dbReference type="EC" id="2.3.1.16" evidence="1"/>
<dbReference type="EMBL" id="CP000468">
    <property type="protein sequence ID" value="ABJ03322.1"/>
    <property type="molecule type" value="Genomic_DNA"/>
</dbReference>
<dbReference type="RefSeq" id="WP_000438747.1">
    <property type="nucleotide sequence ID" value="NZ_CADILS010000045.1"/>
</dbReference>
<dbReference type="SMR" id="A1AI32"/>
<dbReference type="GeneID" id="93778092"/>
<dbReference type="KEGG" id="ecv:APECO1_2612"/>
<dbReference type="HOGENOM" id="CLU_031026_2_3_6"/>
<dbReference type="UniPathway" id="UPA00659"/>
<dbReference type="Proteomes" id="UP000008216">
    <property type="component" value="Chromosome"/>
</dbReference>
<dbReference type="GO" id="GO:0005737">
    <property type="term" value="C:cytoplasm"/>
    <property type="evidence" value="ECO:0007669"/>
    <property type="project" value="UniProtKB-SubCell"/>
</dbReference>
<dbReference type="GO" id="GO:0003988">
    <property type="term" value="F:acetyl-CoA C-acyltransferase activity"/>
    <property type="evidence" value="ECO:0007669"/>
    <property type="project" value="UniProtKB-UniRule"/>
</dbReference>
<dbReference type="GO" id="GO:0006635">
    <property type="term" value="P:fatty acid beta-oxidation"/>
    <property type="evidence" value="ECO:0007669"/>
    <property type="project" value="UniProtKB-UniRule"/>
</dbReference>
<dbReference type="GO" id="GO:0010124">
    <property type="term" value="P:phenylacetate catabolic process"/>
    <property type="evidence" value="ECO:0007669"/>
    <property type="project" value="TreeGrafter"/>
</dbReference>
<dbReference type="CDD" id="cd00751">
    <property type="entry name" value="thiolase"/>
    <property type="match status" value="1"/>
</dbReference>
<dbReference type="FunFam" id="3.40.47.10:FF:000010">
    <property type="entry name" value="Acetyl-CoA acetyltransferase (Thiolase)"/>
    <property type="match status" value="1"/>
</dbReference>
<dbReference type="Gene3D" id="3.40.47.10">
    <property type="match status" value="2"/>
</dbReference>
<dbReference type="HAMAP" id="MF_01620">
    <property type="entry name" value="FadA"/>
    <property type="match status" value="1"/>
</dbReference>
<dbReference type="InterPro" id="IPR012805">
    <property type="entry name" value="FadA"/>
</dbReference>
<dbReference type="InterPro" id="IPR002155">
    <property type="entry name" value="Thiolase"/>
</dbReference>
<dbReference type="InterPro" id="IPR016039">
    <property type="entry name" value="Thiolase-like"/>
</dbReference>
<dbReference type="InterPro" id="IPR050215">
    <property type="entry name" value="Thiolase-like_sf_Thiolase"/>
</dbReference>
<dbReference type="InterPro" id="IPR020615">
    <property type="entry name" value="Thiolase_acyl_enz_int_AS"/>
</dbReference>
<dbReference type="InterPro" id="IPR020610">
    <property type="entry name" value="Thiolase_AS"/>
</dbReference>
<dbReference type="InterPro" id="IPR020617">
    <property type="entry name" value="Thiolase_C"/>
</dbReference>
<dbReference type="InterPro" id="IPR020613">
    <property type="entry name" value="Thiolase_CS"/>
</dbReference>
<dbReference type="InterPro" id="IPR020616">
    <property type="entry name" value="Thiolase_N"/>
</dbReference>
<dbReference type="NCBIfam" id="TIGR01930">
    <property type="entry name" value="AcCoA-C-Actrans"/>
    <property type="match status" value="1"/>
</dbReference>
<dbReference type="NCBIfam" id="TIGR02445">
    <property type="entry name" value="fadA"/>
    <property type="match status" value="1"/>
</dbReference>
<dbReference type="NCBIfam" id="NF006510">
    <property type="entry name" value="PRK08947.1"/>
    <property type="match status" value="1"/>
</dbReference>
<dbReference type="PANTHER" id="PTHR43853:SF11">
    <property type="entry name" value="3-KETOACYL-COA THIOLASE FADA"/>
    <property type="match status" value="1"/>
</dbReference>
<dbReference type="PANTHER" id="PTHR43853">
    <property type="entry name" value="3-KETOACYL-COA THIOLASE, PEROXISOMAL"/>
    <property type="match status" value="1"/>
</dbReference>
<dbReference type="Pfam" id="PF02803">
    <property type="entry name" value="Thiolase_C"/>
    <property type="match status" value="1"/>
</dbReference>
<dbReference type="Pfam" id="PF00108">
    <property type="entry name" value="Thiolase_N"/>
    <property type="match status" value="1"/>
</dbReference>
<dbReference type="PIRSF" id="PIRSF000429">
    <property type="entry name" value="Ac-CoA_Ac_transf"/>
    <property type="match status" value="1"/>
</dbReference>
<dbReference type="SUPFAM" id="SSF53901">
    <property type="entry name" value="Thiolase-like"/>
    <property type="match status" value="2"/>
</dbReference>
<dbReference type="PROSITE" id="PS00098">
    <property type="entry name" value="THIOLASE_1"/>
    <property type="match status" value="1"/>
</dbReference>
<dbReference type="PROSITE" id="PS00737">
    <property type="entry name" value="THIOLASE_2"/>
    <property type="match status" value="1"/>
</dbReference>
<dbReference type="PROSITE" id="PS00099">
    <property type="entry name" value="THIOLASE_3"/>
    <property type="match status" value="1"/>
</dbReference>
<organism>
    <name type="scientific">Escherichia coli O1:K1 / APEC</name>
    <dbReference type="NCBI Taxonomy" id="405955"/>
    <lineage>
        <taxon>Bacteria</taxon>
        <taxon>Pseudomonadati</taxon>
        <taxon>Pseudomonadota</taxon>
        <taxon>Gammaproteobacteria</taxon>
        <taxon>Enterobacterales</taxon>
        <taxon>Enterobacteriaceae</taxon>
        <taxon>Escherichia</taxon>
    </lineage>
</organism>
<comment type="function">
    <text evidence="1">Catalyzes the final step of fatty acid oxidation in which acetyl-CoA is released and the CoA ester of a fatty acid two carbons shorter is formed.</text>
</comment>
<comment type="catalytic activity">
    <reaction evidence="1">
        <text>an acyl-CoA + acetyl-CoA = a 3-oxoacyl-CoA + CoA</text>
        <dbReference type="Rhea" id="RHEA:21564"/>
        <dbReference type="ChEBI" id="CHEBI:57287"/>
        <dbReference type="ChEBI" id="CHEBI:57288"/>
        <dbReference type="ChEBI" id="CHEBI:58342"/>
        <dbReference type="ChEBI" id="CHEBI:90726"/>
        <dbReference type="EC" id="2.3.1.16"/>
    </reaction>
</comment>
<comment type="pathway">
    <text evidence="1">Lipid metabolism; fatty acid beta-oxidation.</text>
</comment>
<comment type="subunit">
    <text evidence="1">Heterotetramer of two alpha chains (FadB) and two beta chains (FadA).</text>
</comment>
<comment type="subcellular location">
    <subcellularLocation>
        <location evidence="1">Cytoplasm</location>
    </subcellularLocation>
</comment>
<comment type="similarity">
    <text evidence="1">Belongs to the thiolase-like superfamily. Thiolase family.</text>
</comment>
<sequence>MEQVVIVDAIRTPMGRSKGGAFRNVRAEDLSAHLMRSLLARNPALEAAALDDIYWGCVQQTLEQGFNIARNAALLAEVPHSVPAVTVNRLCGSSMQALHDAARMIMTGDAQACLVGGVEHMGHVPMSHGVDFHPGLSRNVAKAAGMMGLTAEMLARMHGISREMQDAFAARSHARAWAATQSGAFKNEIIPTGGHDADGVLKQFNYDEVIRPETTVEALATLRPAFDPVSGTVTAGTSSALSDGAAAMLVMSESRARELGLKPRARVRSMAVVGCDPSIMGYGPVPASKLALKKAGLSASDIGVFEMNEAFAAQILPCIKDLGLMEQIDEKINLNGGAIALGHPLGCSGARISTTLLNLMEHKDVQFGLATMCIGLGQGIATVFERV</sequence>